<organism>
    <name type="scientific">Pinus pinaster</name>
    <name type="common">Maritime pine</name>
    <dbReference type="NCBI Taxonomy" id="71647"/>
    <lineage>
        <taxon>Eukaryota</taxon>
        <taxon>Viridiplantae</taxon>
        <taxon>Streptophyta</taxon>
        <taxon>Embryophyta</taxon>
        <taxon>Tracheophyta</taxon>
        <taxon>Spermatophyta</taxon>
        <taxon>Pinopsida</taxon>
        <taxon>Pinidae</taxon>
        <taxon>Conifers I</taxon>
        <taxon>Pinales</taxon>
        <taxon>Pinaceae</taxon>
        <taxon>Pinus</taxon>
        <taxon>Pinus subgen. Pinus</taxon>
    </lineage>
</organism>
<comment type="function">
    <text evidence="1">May interact with a ClpP-like protease involved in degradation of denatured proteins in the chloroplast.</text>
</comment>
<comment type="subcellular location">
    <subcellularLocation>
        <location evidence="1">Plastid</location>
        <location evidence="1">Chloroplast</location>
    </subcellularLocation>
</comment>
<comment type="miscellaneous">
    <text>On the 2D-gel the determined pI of this protein (spot n9) is: 5.9, its MW is: 92 kDa.</text>
</comment>
<comment type="similarity">
    <text evidence="2">Belongs to the ClpA/ClpB family.</text>
</comment>
<proteinExistence type="evidence at protein level"/>
<protein>
    <recommendedName>
        <fullName>ATP-dependent Clp protease ATP-binding subunit ClpA homolog</fullName>
    </recommendedName>
</protein>
<dbReference type="GO" id="GO:0009507">
    <property type="term" value="C:chloroplast"/>
    <property type="evidence" value="ECO:0007669"/>
    <property type="project" value="UniProtKB-SubCell"/>
</dbReference>
<dbReference type="GO" id="GO:0005524">
    <property type="term" value="F:ATP binding"/>
    <property type="evidence" value="ECO:0007669"/>
    <property type="project" value="UniProtKB-KW"/>
</dbReference>
<reference key="1">
    <citation type="journal article" date="1999" name="Electrophoresis">
        <title>Separation and characterization of needle and xylem maritime pine proteins.</title>
        <authorList>
            <person name="Costa P."/>
            <person name="Pionneau C."/>
            <person name="Bauw G."/>
            <person name="Dubos C."/>
            <person name="Bahrman N."/>
            <person name="Kremer A."/>
            <person name="Frigerio J.-M."/>
            <person name="Plomion C."/>
        </authorList>
    </citation>
    <scope>PROTEIN SEQUENCE</scope>
    <source>
        <tissue>Needle</tissue>
    </source>
</reference>
<keyword id="KW-0067">ATP-binding</keyword>
<keyword id="KW-0143">Chaperone</keyword>
<keyword id="KW-0150">Chloroplast</keyword>
<keyword id="KW-0903">Direct protein sequencing</keyword>
<keyword id="KW-0547">Nucleotide-binding</keyword>
<keyword id="KW-0934">Plastid</keyword>
<keyword id="KW-0677">Repeat</keyword>
<name>CLPA_PINPS</name>
<feature type="chain" id="PRO_0000191214" description="ATP-dependent Clp protease ATP-binding subunit ClpA homolog">
    <location>
        <begin position="1" status="less than"/>
        <end position="30" status="greater than"/>
    </location>
</feature>
<feature type="non-consecutive residues" evidence="2">
    <location>
        <begin position="15"/>
        <end position="16"/>
    </location>
</feature>
<feature type="non-terminal residue">
    <location>
        <position position="1"/>
    </location>
</feature>
<feature type="non-terminal residue">
    <location>
        <position position="30"/>
    </location>
</feature>
<sequence length="30" mass="2923">AESEAGDASPLVTEVLIGSPPGYVGYTEGG</sequence>
<accession>P81671</accession>
<evidence type="ECO:0000250" key="1"/>
<evidence type="ECO:0000305" key="2"/>